<proteinExistence type="inferred from homology"/>
<sequence length="167" mass="19565">MPGNSPHYGRWPQHDFTSLKKLRPQSVTSRIQPGSDVIVCAEMDEQWGYVGAKSRQRWLFYAYDSLRKTVVAHVFGERTMATLGRLMSLLSPFDVVIWMTDGWPLYESRLKGKLHVISKRYTQRIERHNLNLRQHLARLGRKSLSFSKSVELHDKVIGHYLNIKHYQ</sequence>
<comment type="function">
    <text>Absolutely required for transposition of IS1.</text>
</comment>
<comment type="similarity">
    <text evidence="1">Belongs to the transposase 27 family.</text>
</comment>
<evidence type="ECO:0000305" key="1"/>
<feature type="chain" id="PRO_0000393404" description="Insertion element IS1 6 protein InsB">
    <location>
        <begin position="1"/>
        <end position="167"/>
    </location>
</feature>
<name>INSB6_ECOLI</name>
<accession>P0CF29</accession>
<accession>P03830</accession>
<accession>P77707</accession>
<accession>Q2MCH3</accession>
<dbReference type="EMBL" id="U18997">
    <property type="protein sequence ID" value="AAA58243.1"/>
    <property type="molecule type" value="Genomic_DNA"/>
</dbReference>
<dbReference type="EMBL" id="X52537">
    <property type="status" value="NOT_ANNOTATED_CDS"/>
    <property type="molecule type" value="Genomic_DNA"/>
</dbReference>
<dbReference type="EMBL" id="U00096">
    <property type="protein sequence ID" value="AAC76470.1"/>
    <property type="molecule type" value="Genomic_DNA"/>
</dbReference>
<dbReference type="EMBL" id="AP009048">
    <property type="protein sequence ID" value="BAE77848.1"/>
    <property type="molecule type" value="Genomic_DNA"/>
</dbReference>
<dbReference type="PIR" id="JN0135">
    <property type="entry name" value="JN0135"/>
</dbReference>
<dbReference type="RefSeq" id="NP_417902.1">
    <property type="nucleotide sequence ID" value="NC_000913.3"/>
</dbReference>
<dbReference type="FunCoup" id="P0CF29">
    <property type="interactions" value="9"/>
</dbReference>
<dbReference type="EnsemblBacteria" id="AAC76470">
    <property type="protein sequence ID" value="AAC76470"/>
    <property type="gene ID" value="b3445"/>
</dbReference>
<dbReference type="GeneID" id="947949"/>
<dbReference type="KEGG" id="ecj:JW3409"/>
<dbReference type="KEGG" id="eco:b0021"/>
<dbReference type="KEGG" id="eco:b1893"/>
<dbReference type="KEGG" id="eco:b3445"/>
<dbReference type="KEGG" id="ecoc:C3026_17555"/>
<dbReference type="KEGG" id="ecoc:C3026_18660"/>
<dbReference type="PATRIC" id="fig|511145.12.peg.18"/>
<dbReference type="EchoBASE" id="EB4728"/>
<dbReference type="HOGENOM" id="CLU_076276_2_0_6"/>
<dbReference type="InParanoid" id="P0CF29"/>
<dbReference type="OMA" id="VEICRAD"/>
<dbReference type="PhylomeDB" id="P0CF29"/>
<dbReference type="BioCyc" id="EcoCyc:MONOMER0-4450"/>
<dbReference type="PRO" id="PR:P0CF29"/>
<dbReference type="Proteomes" id="UP000000625">
    <property type="component" value="Chromosome"/>
</dbReference>
<dbReference type="GO" id="GO:0003677">
    <property type="term" value="F:DNA binding"/>
    <property type="evidence" value="ECO:0007669"/>
    <property type="project" value="InterPro"/>
</dbReference>
<dbReference type="GO" id="GO:0004803">
    <property type="term" value="F:transposase activity"/>
    <property type="evidence" value="ECO:0007669"/>
    <property type="project" value="InterPro"/>
</dbReference>
<dbReference type="GO" id="GO:0006313">
    <property type="term" value="P:DNA transposition"/>
    <property type="evidence" value="ECO:0000318"/>
    <property type="project" value="GO_Central"/>
</dbReference>
<dbReference type="InterPro" id="IPR005063">
    <property type="entry name" value="Transposase_27"/>
</dbReference>
<dbReference type="InterPro" id="IPR051354">
    <property type="entry name" value="Transposase_27_IS1"/>
</dbReference>
<dbReference type="NCBIfam" id="NF033558">
    <property type="entry name" value="transpos_IS1"/>
    <property type="match status" value="1"/>
</dbReference>
<dbReference type="PANTHER" id="PTHR33293">
    <property type="entry name" value="INSERTION ELEMENT IS1 1 PROTEIN INSB-RELATED"/>
    <property type="match status" value="1"/>
</dbReference>
<dbReference type="PANTHER" id="PTHR33293:SF1">
    <property type="entry name" value="INSERTION ELEMENT IS1 1 PROTEIN INSB-RELATED"/>
    <property type="match status" value="1"/>
</dbReference>
<dbReference type="Pfam" id="PF03400">
    <property type="entry name" value="DDE_Tnp_IS1"/>
    <property type="match status" value="1"/>
</dbReference>
<protein>
    <recommendedName>
        <fullName>Insertion element IS1 6 protein InsB</fullName>
    </recommendedName>
    <alternativeName>
        <fullName>IS1e</fullName>
    </alternativeName>
</protein>
<gene>
    <name type="primary">insB6</name>
    <name type="ordered locus">b3445</name>
    <name type="ordered locus">JW3409</name>
</gene>
<keyword id="KW-0233">DNA recombination</keyword>
<keyword id="KW-1185">Reference proteome</keyword>
<keyword id="KW-0814">Transposable element</keyword>
<keyword id="KW-0815">Transposition</keyword>
<reference key="1">
    <citation type="journal article" date="1991" name="Gene">
        <title>Four types of IS1 with differences in nucleotide sequence reside in the Escherichia coli K-12 chromosome.</title>
        <authorList>
            <person name="Umeda M."/>
            <person name="Ohtsubo E."/>
        </authorList>
    </citation>
    <scope>NUCLEOTIDE SEQUENCE [GENOMIC DNA]</scope>
    <source>
        <strain>K12 / W3110 / ATCC 27325 / DSM 5911</strain>
    </source>
</reference>
<reference key="2">
    <citation type="journal article" date="1997" name="Science">
        <title>The complete genome sequence of Escherichia coli K-12.</title>
        <authorList>
            <person name="Blattner F.R."/>
            <person name="Plunkett G. III"/>
            <person name="Bloch C.A."/>
            <person name="Perna N.T."/>
            <person name="Burland V."/>
            <person name="Riley M."/>
            <person name="Collado-Vides J."/>
            <person name="Glasner J.D."/>
            <person name="Rode C.K."/>
            <person name="Mayhew G.F."/>
            <person name="Gregor J."/>
            <person name="Davis N.W."/>
            <person name="Kirkpatrick H.A."/>
            <person name="Goeden M.A."/>
            <person name="Rose D.J."/>
            <person name="Mau B."/>
            <person name="Shao Y."/>
        </authorList>
    </citation>
    <scope>NUCLEOTIDE SEQUENCE [LARGE SCALE GENOMIC DNA]</scope>
    <source>
        <strain>K12 / MG1655 / ATCC 47076</strain>
    </source>
</reference>
<reference key="3">
    <citation type="journal article" date="2006" name="Mol. Syst. Biol.">
        <title>Highly accurate genome sequences of Escherichia coli K-12 strains MG1655 and W3110.</title>
        <authorList>
            <person name="Hayashi K."/>
            <person name="Morooka N."/>
            <person name="Yamamoto Y."/>
            <person name="Fujita K."/>
            <person name="Isono K."/>
            <person name="Choi S."/>
            <person name="Ohtsubo E."/>
            <person name="Baba T."/>
            <person name="Wanner B.L."/>
            <person name="Mori H."/>
            <person name="Horiuchi T."/>
        </authorList>
    </citation>
    <scope>NUCLEOTIDE SEQUENCE [LARGE SCALE GENOMIC DNA]</scope>
    <source>
        <strain>K12 / W3110 / ATCC 27325 / DSM 5911</strain>
    </source>
</reference>
<organism>
    <name type="scientific">Escherichia coli (strain K12)</name>
    <dbReference type="NCBI Taxonomy" id="83333"/>
    <lineage>
        <taxon>Bacteria</taxon>
        <taxon>Pseudomonadati</taxon>
        <taxon>Pseudomonadota</taxon>
        <taxon>Gammaproteobacteria</taxon>
        <taxon>Enterobacterales</taxon>
        <taxon>Enterobacteriaceae</taxon>
        <taxon>Escherichia</taxon>
    </lineage>
</organism>